<comment type="function">
    <text evidence="1">Transfers and isomerizes the ribose moiety from AdoMet to the 7-aminomethyl group of 7-deazaguanine (preQ1-tRNA) to give epoxyqueuosine (oQ-tRNA).</text>
</comment>
<comment type="catalytic activity">
    <reaction evidence="1">
        <text>7-aminomethyl-7-carbaguanosine(34) in tRNA + S-adenosyl-L-methionine = epoxyqueuosine(34) in tRNA + adenine + L-methionine + 2 H(+)</text>
        <dbReference type="Rhea" id="RHEA:32155"/>
        <dbReference type="Rhea" id="RHEA-COMP:10342"/>
        <dbReference type="Rhea" id="RHEA-COMP:18582"/>
        <dbReference type="ChEBI" id="CHEBI:15378"/>
        <dbReference type="ChEBI" id="CHEBI:16708"/>
        <dbReference type="ChEBI" id="CHEBI:57844"/>
        <dbReference type="ChEBI" id="CHEBI:59789"/>
        <dbReference type="ChEBI" id="CHEBI:82833"/>
        <dbReference type="ChEBI" id="CHEBI:194443"/>
        <dbReference type="EC" id="2.4.99.17"/>
    </reaction>
</comment>
<comment type="pathway">
    <text evidence="1">tRNA modification; tRNA-queuosine biosynthesis.</text>
</comment>
<comment type="subunit">
    <text evidence="1">Monomer.</text>
</comment>
<comment type="subcellular location">
    <subcellularLocation>
        <location evidence="1">Cytoplasm</location>
    </subcellularLocation>
</comment>
<comment type="similarity">
    <text evidence="1">Belongs to the QueA family.</text>
</comment>
<accession>B9JFA8</accession>
<feature type="chain" id="PRO_1000119136" description="S-adenosylmethionine:tRNA ribosyltransferase-isomerase">
    <location>
        <begin position="1"/>
        <end position="360"/>
    </location>
</feature>
<keyword id="KW-0963">Cytoplasm</keyword>
<keyword id="KW-0671">Queuosine biosynthesis</keyword>
<keyword id="KW-0949">S-adenosyl-L-methionine</keyword>
<keyword id="KW-0808">Transferase</keyword>
<dbReference type="EC" id="2.4.99.17" evidence="1"/>
<dbReference type="EMBL" id="CP000628">
    <property type="protein sequence ID" value="ACM26598.1"/>
    <property type="molecule type" value="Genomic_DNA"/>
</dbReference>
<dbReference type="RefSeq" id="WP_012651460.1">
    <property type="nucleotide sequence ID" value="NC_011985.1"/>
</dbReference>
<dbReference type="SMR" id="B9JFA8"/>
<dbReference type="STRING" id="311403.Arad_2393"/>
<dbReference type="KEGG" id="ara:Arad_2393"/>
<dbReference type="eggNOG" id="COG0809">
    <property type="taxonomic scope" value="Bacteria"/>
</dbReference>
<dbReference type="HOGENOM" id="CLU_039110_1_1_5"/>
<dbReference type="UniPathway" id="UPA00392"/>
<dbReference type="Proteomes" id="UP000001600">
    <property type="component" value="Chromosome 1"/>
</dbReference>
<dbReference type="GO" id="GO:0005737">
    <property type="term" value="C:cytoplasm"/>
    <property type="evidence" value="ECO:0007669"/>
    <property type="project" value="UniProtKB-SubCell"/>
</dbReference>
<dbReference type="GO" id="GO:0051075">
    <property type="term" value="F:S-adenosylmethionine:tRNA ribosyltransferase-isomerase activity"/>
    <property type="evidence" value="ECO:0007669"/>
    <property type="project" value="UniProtKB-EC"/>
</dbReference>
<dbReference type="GO" id="GO:0008616">
    <property type="term" value="P:queuosine biosynthetic process"/>
    <property type="evidence" value="ECO:0007669"/>
    <property type="project" value="UniProtKB-UniRule"/>
</dbReference>
<dbReference type="GO" id="GO:0002099">
    <property type="term" value="P:tRNA wobble guanine modification"/>
    <property type="evidence" value="ECO:0007669"/>
    <property type="project" value="TreeGrafter"/>
</dbReference>
<dbReference type="FunFam" id="3.40.1780.10:FF:000001">
    <property type="entry name" value="S-adenosylmethionine:tRNA ribosyltransferase-isomerase"/>
    <property type="match status" value="1"/>
</dbReference>
<dbReference type="Gene3D" id="2.40.10.240">
    <property type="entry name" value="QueA-like"/>
    <property type="match status" value="1"/>
</dbReference>
<dbReference type="Gene3D" id="3.40.1780.10">
    <property type="entry name" value="QueA-like"/>
    <property type="match status" value="1"/>
</dbReference>
<dbReference type="HAMAP" id="MF_00113">
    <property type="entry name" value="QueA"/>
    <property type="match status" value="1"/>
</dbReference>
<dbReference type="InterPro" id="IPR003699">
    <property type="entry name" value="QueA"/>
</dbReference>
<dbReference type="InterPro" id="IPR042118">
    <property type="entry name" value="QueA_dom1"/>
</dbReference>
<dbReference type="InterPro" id="IPR042119">
    <property type="entry name" value="QueA_dom2"/>
</dbReference>
<dbReference type="InterPro" id="IPR036100">
    <property type="entry name" value="QueA_sf"/>
</dbReference>
<dbReference type="NCBIfam" id="NF001140">
    <property type="entry name" value="PRK00147.1"/>
    <property type="match status" value="1"/>
</dbReference>
<dbReference type="NCBIfam" id="TIGR00113">
    <property type="entry name" value="queA"/>
    <property type="match status" value="1"/>
</dbReference>
<dbReference type="PANTHER" id="PTHR30307">
    <property type="entry name" value="S-ADENOSYLMETHIONINE:TRNA RIBOSYLTRANSFERASE-ISOMERASE"/>
    <property type="match status" value="1"/>
</dbReference>
<dbReference type="PANTHER" id="PTHR30307:SF0">
    <property type="entry name" value="S-ADENOSYLMETHIONINE:TRNA RIBOSYLTRANSFERASE-ISOMERASE"/>
    <property type="match status" value="1"/>
</dbReference>
<dbReference type="Pfam" id="PF02547">
    <property type="entry name" value="Queuosine_synth"/>
    <property type="match status" value="1"/>
</dbReference>
<dbReference type="SUPFAM" id="SSF111337">
    <property type="entry name" value="QueA-like"/>
    <property type="match status" value="1"/>
</dbReference>
<protein>
    <recommendedName>
        <fullName evidence="1">S-adenosylmethionine:tRNA ribosyltransferase-isomerase</fullName>
        <ecNumber evidence="1">2.4.99.17</ecNumber>
    </recommendedName>
    <alternativeName>
        <fullName evidence="1">Queuosine biosynthesis protein QueA</fullName>
    </alternativeName>
</protein>
<name>QUEA_RHIR8</name>
<evidence type="ECO:0000255" key="1">
    <source>
        <dbReference type="HAMAP-Rule" id="MF_00113"/>
    </source>
</evidence>
<gene>
    <name evidence="1" type="primary">queA</name>
    <name type="ordered locus">Arad_2393</name>
</gene>
<reference key="1">
    <citation type="journal article" date="2009" name="J. Bacteriol.">
        <title>Genome sequences of three Agrobacterium biovars help elucidate the evolution of multichromosome genomes in bacteria.</title>
        <authorList>
            <person name="Slater S.C."/>
            <person name="Goldman B.S."/>
            <person name="Goodner B."/>
            <person name="Setubal J.C."/>
            <person name="Farrand S.K."/>
            <person name="Nester E.W."/>
            <person name="Burr T.J."/>
            <person name="Banta L."/>
            <person name="Dickerman A.W."/>
            <person name="Paulsen I."/>
            <person name="Otten L."/>
            <person name="Suen G."/>
            <person name="Welch R."/>
            <person name="Almeida N.F."/>
            <person name="Arnold F."/>
            <person name="Burton O.T."/>
            <person name="Du Z."/>
            <person name="Ewing A."/>
            <person name="Godsy E."/>
            <person name="Heisel S."/>
            <person name="Houmiel K.L."/>
            <person name="Jhaveri J."/>
            <person name="Lu J."/>
            <person name="Miller N.M."/>
            <person name="Norton S."/>
            <person name="Chen Q."/>
            <person name="Phoolcharoen W."/>
            <person name="Ohlin V."/>
            <person name="Ondrusek D."/>
            <person name="Pride N."/>
            <person name="Stricklin S.L."/>
            <person name="Sun J."/>
            <person name="Wheeler C."/>
            <person name="Wilson L."/>
            <person name="Zhu H."/>
            <person name="Wood D.W."/>
        </authorList>
    </citation>
    <scope>NUCLEOTIDE SEQUENCE [LARGE SCALE GENOMIC DNA]</scope>
    <source>
        <strain>K84 / ATCC BAA-868</strain>
    </source>
</reference>
<organism>
    <name type="scientific">Rhizobium rhizogenes (strain K84 / ATCC BAA-868)</name>
    <name type="common">Agrobacterium radiobacter</name>
    <dbReference type="NCBI Taxonomy" id="311403"/>
    <lineage>
        <taxon>Bacteria</taxon>
        <taxon>Pseudomonadati</taxon>
        <taxon>Pseudomonadota</taxon>
        <taxon>Alphaproteobacteria</taxon>
        <taxon>Hyphomicrobiales</taxon>
        <taxon>Rhizobiaceae</taxon>
        <taxon>Rhizobium/Agrobacterium group</taxon>
        <taxon>Rhizobium</taxon>
    </lineage>
</organism>
<proteinExistence type="inferred from homology"/>
<sequence length="360" mass="39388">MRVDLFDFDLPDERIALRPAEPRDSARLLVVDPNAEMVLSDRQIRDLSSYLRPGDAIVFNDTKVIPAQLEGIRHREGAPGQQVSATLHMRAAPDRWKAFAKPGKRIKIGDRIQFGHGENVCALGALDAVVEEKGEGGEITLRFDLSGPALDEAIAAVGHIPLPPYIAAKRPEDERDRADYQTIYAREEGAVAAPTAGLHFTPSLFATLDAMGVERHFVTLHVGAGTFLPVKADDTEDHKMHFEIGHVDAATAEKLNAVKARGGRIVCVGTTSLRLLESAAAEDGTIKPWSGATGIFITPGYRFKTVDLLMTNFHLPRSTLFMLVSAFAGLDTMRAAYTHAIETGYRFYSYGDGSLLHRKD</sequence>